<name>LEUD_CALS4</name>
<comment type="function">
    <text evidence="1">Catalyzes the isomerization between 2-isopropylmalate and 3-isopropylmalate, via the formation of 2-isopropylmaleate.</text>
</comment>
<comment type="catalytic activity">
    <reaction>
        <text>(2R,3S)-3-isopropylmalate = (2S)-2-isopropylmalate</text>
        <dbReference type="Rhea" id="RHEA:32287"/>
        <dbReference type="ChEBI" id="CHEBI:1178"/>
        <dbReference type="ChEBI" id="CHEBI:35121"/>
        <dbReference type="EC" id="4.2.1.33"/>
    </reaction>
</comment>
<comment type="pathway">
    <text>Amino-acid biosynthesis; L-leucine biosynthesis; L-leucine from 3-methyl-2-oxobutanoate: step 2/4.</text>
</comment>
<comment type="subunit">
    <text evidence="1">Heterodimer of LeuC and LeuD.</text>
</comment>
<comment type="similarity">
    <text evidence="2">Belongs to the LeuD family. LeuD type 2 subfamily.</text>
</comment>
<dbReference type="EC" id="4.2.1.33"/>
<dbReference type="EMBL" id="AE008691">
    <property type="protein sequence ID" value="AAM23335.1"/>
    <property type="molecule type" value="Genomic_DNA"/>
</dbReference>
<dbReference type="RefSeq" id="WP_011024552.1">
    <property type="nucleotide sequence ID" value="NZ_JANUCV010000001.1"/>
</dbReference>
<dbReference type="SMR" id="Q8RDK1"/>
<dbReference type="STRING" id="273068.TTE0018"/>
<dbReference type="KEGG" id="tte:TTE0018"/>
<dbReference type="eggNOG" id="COG0066">
    <property type="taxonomic scope" value="Bacteria"/>
</dbReference>
<dbReference type="HOGENOM" id="CLU_081378_1_1_9"/>
<dbReference type="OrthoDB" id="9777465at2"/>
<dbReference type="UniPathway" id="UPA00048">
    <property type="reaction ID" value="UER00071"/>
</dbReference>
<dbReference type="Proteomes" id="UP000000555">
    <property type="component" value="Chromosome"/>
</dbReference>
<dbReference type="GO" id="GO:0003861">
    <property type="term" value="F:3-isopropylmalate dehydratase activity"/>
    <property type="evidence" value="ECO:0007669"/>
    <property type="project" value="UniProtKB-UniRule"/>
</dbReference>
<dbReference type="GO" id="GO:0009098">
    <property type="term" value="P:L-leucine biosynthetic process"/>
    <property type="evidence" value="ECO:0007669"/>
    <property type="project" value="UniProtKB-UniRule"/>
</dbReference>
<dbReference type="CDD" id="cd01577">
    <property type="entry name" value="IPMI_Swivel"/>
    <property type="match status" value="1"/>
</dbReference>
<dbReference type="FunFam" id="3.20.19.10:FF:000007">
    <property type="entry name" value="Isopropylmalate/citramalate isomerase small subunit"/>
    <property type="match status" value="1"/>
</dbReference>
<dbReference type="Gene3D" id="3.20.19.10">
    <property type="entry name" value="Aconitase, domain 4"/>
    <property type="match status" value="1"/>
</dbReference>
<dbReference type="HAMAP" id="MF_01032">
    <property type="entry name" value="LeuD_type2"/>
    <property type="match status" value="1"/>
</dbReference>
<dbReference type="InterPro" id="IPR015928">
    <property type="entry name" value="Aconitase/3IPM_dehydase_swvl"/>
</dbReference>
<dbReference type="InterPro" id="IPR000573">
    <property type="entry name" value="AconitaseA/IPMdHydase_ssu_swvl"/>
</dbReference>
<dbReference type="InterPro" id="IPR033940">
    <property type="entry name" value="IPMI_Swivel"/>
</dbReference>
<dbReference type="InterPro" id="IPR050075">
    <property type="entry name" value="LeuD"/>
</dbReference>
<dbReference type="InterPro" id="IPR011824">
    <property type="entry name" value="LeuD/DmdB_bac"/>
</dbReference>
<dbReference type="InterPro" id="IPR011827">
    <property type="entry name" value="LeuD_type2/HacB/DmdB"/>
</dbReference>
<dbReference type="NCBIfam" id="TIGR02084">
    <property type="entry name" value="leud"/>
    <property type="match status" value="1"/>
</dbReference>
<dbReference type="NCBIfam" id="TIGR02087">
    <property type="entry name" value="LEUD_arch"/>
    <property type="match status" value="1"/>
</dbReference>
<dbReference type="PANTHER" id="PTHR43345:SF2">
    <property type="entry name" value="3-ISOPROPYLMALATE DEHYDRATASE SMALL SUBUNIT 1"/>
    <property type="match status" value="1"/>
</dbReference>
<dbReference type="PANTHER" id="PTHR43345">
    <property type="entry name" value="3-ISOPROPYLMALATE DEHYDRATASE SMALL SUBUNIT 2-RELATED-RELATED"/>
    <property type="match status" value="1"/>
</dbReference>
<dbReference type="Pfam" id="PF00694">
    <property type="entry name" value="Aconitase_C"/>
    <property type="match status" value="1"/>
</dbReference>
<dbReference type="SUPFAM" id="SSF52016">
    <property type="entry name" value="LeuD/IlvD-like"/>
    <property type="match status" value="1"/>
</dbReference>
<organism>
    <name type="scientific">Caldanaerobacter subterraneus subsp. tengcongensis (strain DSM 15242 / JCM 11007 / NBRC 100824 / MB4)</name>
    <name type="common">Thermoanaerobacter tengcongensis</name>
    <dbReference type="NCBI Taxonomy" id="273068"/>
    <lineage>
        <taxon>Bacteria</taxon>
        <taxon>Bacillati</taxon>
        <taxon>Bacillota</taxon>
        <taxon>Clostridia</taxon>
        <taxon>Thermoanaerobacterales</taxon>
        <taxon>Thermoanaerobacteraceae</taxon>
        <taxon>Caldanaerobacter</taxon>
    </lineage>
</organism>
<feature type="chain" id="PRO_0000141929" description="3-isopropylmalate dehydratase small subunit">
    <location>
        <begin position="1"/>
        <end position="161"/>
    </location>
</feature>
<protein>
    <recommendedName>
        <fullName>3-isopropylmalate dehydratase small subunit</fullName>
        <ecNumber>4.2.1.33</ecNumber>
    </recommendedName>
    <alternativeName>
        <fullName>Alpha-IPM isomerase</fullName>
        <shortName>IPMI</shortName>
    </alternativeName>
    <alternativeName>
        <fullName>Isopropylmalate isomerase</fullName>
    </alternativeName>
</protein>
<gene>
    <name type="primary">leuD</name>
    <name type="ordered locus">TTE0018</name>
</gene>
<sequence length="161" mass="17888">MQGKAIKYGDNIDTDVIIPARFLNTSDPKELAEHCMEDLDREFKNKVKEGDILVVGENFGCGSSREHAPLAIKASGISCIIAKSFARIFYRNAINIGLPILESREAVDGIEEGDIVSVDVDNGIIRNVTKGTEFKAQPFPEFIKEIIKYGGLINYVREKVR</sequence>
<evidence type="ECO:0000250" key="1"/>
<evidence type="ECO:0000305" key="2"/>
<keyword id="KW-0028">Amino-acid biosynthesis</keyword>
<keyword id="KW-0100">Branched-chain amino acid biosynthesis</keyword>
<keyword id="KW-0432">Leucine biosynthesis</keyword>
<keyword id="KW-0456">Lyase</keyword>
<keyword id="KW-1185">Reference proteome</keyword>
<reference key="1">
    <citation type="journal article" date="2002" name="Genome Res.">
        <title>A complete sequence of the T. tengcongensis genome.</title>
        <authorList>
            <person name="Bao Q."/>
            <person name="Tian Y."/>
            <person name="Li W."/>
            <person name="Xu Z."/>
            <person name="Xuan Z."/>
            <person name="Hu S."/>
            <person name="Dong W."/>
            <person name="Yang J."/>
            <person name="Chen Y."/>
            <person name="Xue Y."/>
            <person name="Xu Y."/>
            <person name="Lai X."/>
            <person name="Huang L."/>
            <person name="Dong X."/>
            <person name="Ma Y."/>
            <person name="Ling L."/>
            <person name="Tan H."/>
            <person name="Chen R."/>
            <person name="Wang J."/>
            <person name="Yu J."/>
            <person name="Yang H."/>
        </authorList>
    </citation>
    <scope>NUCLEOTIDE SEQUENCE [LARGE SCALE GENOMIC DNA]</scope>
    <source>
        <strain>DSM 15242 / JCM 11007 / NBRC 100824 / MB4</strain>
    </source>
</reference>
<accession>Q8RDK1</accession>
<proteinExistence type="inferred from homology"/>